<organism>
    <name type="scientific">Trichormus variabilis (strain ATCC 29413 / PCC 7937)</name>
    <name type="common">Anabaena variabilis</name>
    <dbReference type="NCBI Taxonomy" id="240292"/>
    <lineage>
        <taxon>Bacteria</taxon>
        <taxon>Bacillati</taxon>
        <taxon>Cyanobacteriota</taxon>
        <taxon>Cyanophyceae</taxon>
        <taxon>Nostocales</taxon>
        <taxon>Nostocaceae</taxon>
        <taxon>Trichormus</taxon>
    </lineage>
</organism>
<keyword id="KW-0067">ATP-binding</keyword>
<keyword id="KW-0133">Cell shape</keyword>
<keyword id="KW-0961">Cell wall biogenesis/degradation</keyword>
<keyword id="KW-0963">Cytoplasm</keyword>
<keyword id="KW-0436">Ligase</keyword>
<keyword id="KW-0460">Magnesium</keyword>
<keyword id="KW-0464">Manganese</keyword>
<keyword id="KW-0479">Metal-binding</keyword>
<keyword id="KW-0547">Nucleotide-binding</keyword>
<keyword id="KW-0573">Peptidoglycan synthesis</keyword>
<evidence type="ECO:0000250" key="1"/>
<evidence type="ECO:0000255" key="2">
    <source>
        <dbReference type="HAMAP-Rule" id="MF_00047"/>
    </source>
</evidence>
<sequence length="367" mass="39782">MSKLRVGLLFGGRSGEHEVSISSARAIASALSAGENASKYEILPFYIHKDGRWLAGEAPQQVLKSGAPLLESSNSSPADNNLVNSQQQTLERWQSPSQVAEVDVWFPILHGPNGEDGTIQGLLTLMQTPFVGSGVLGSALGMDKIAMKMAFEQAGLPQVKYKAVTRAQIWSNPCVFPKLCDEIEASLGYPCFVKPANLGSSVGISKVRSRQELEDALDNAANYDRRIIVEAGVVAREVECAVLGNDQPQASTVGEITFNSDFYDYETKYTAGKADLLIPAVIPDEISRQIQDMALQAFAAVDAAGLARVDFFYVEATGEVLINEINTLPGFTATSMYPQLWAYSGIPFPELVDKLVQLAIERHNPSH</sequence>
<name>DDL_TRIV2</name>
<protein>
    <recommendedName>
        <fullName evidence="2">D-alanine--D-alanine ligase</fullName>
        <ecNumber evidence="2">6.3.2.4</ecNumber>
    </recommendedName>
    <alternativeName>
        <fullName evidence="2">D-Ala-D-Ala ligase</fullName>
    </alternativeName>
    <alternativeName>
        <fullName evidence="2">D-alanylalanine synthetase</fullName>
    </alternativeName>
</protein>
<proteinExistence type="inferred from homology"/>
<comment type="function">
    <text evidence="2">Cell wall formation.</text>
</comment>
<comment type="catalytic activity">
    <reaction evidence="2">
        <text>2 D-alanine + ATP = D-alanyl-D-alanine + ADP + phosphate + H(+)</text>
        <dbReference type="Rhea" id="RHEA:11224"/>
        <dbReference type="ChEBI" id="CHEBI:15378"/>
        <dbReference type="ChEBI" id="CHEBI:30616"/>
        <dbReference type="ChEBI" id="CHEBI:43474"/>
        <dbReference type="ChEBI" id="CHEBI:57416"/>
        <dbReference type="ChEBI" id="CHEBI:57822"/>
        <dbReference type="ChEBI" id="CHEBI:456216"/>
        <dbReference type="EC" id="6.3.2.4"/>
    </reaction>
</comment>
<comment type="cofactor">
    <cofactor evidence="1">
        <name>Mg(2+)</name>
        <dbReference type="ChEBI" id="CHEBI:18420"/>
    </cofactor>
    <cofactor evidence="1">
        <name>Mn(2+)</name>
        <dbReference type="ChEBI" id="CHEBI:29035"/>
    </cofactor>
    <text evidence="1">Binds 2 magnesium or manganese ions per subunit.</text>
</comment>
<comment type="pathway">
    <text evidence="2">Cell wall biogenesis; peptidoglycan biosynthesis.</text>
</comment>
<comment type="subcellular location">
    <subcellularLocation>
        <location evidence="2">Cytoplasm</location>
    </subcellularLocation>
</comment>
<comment type="similarity">
    <text evidence="2">Belongs to the D-alanine--D-alanine ligase family.</text>
</comment>
<reference key="1">
    <citation type="journal article" date="2014" name="Stand. Genomic Sci.">
        <title>Complete genome sequence of Anabaena variabilis ATCC 29413.</title>
        <authorList>
            <person name="Thiel T."/>
            <person name="Pratte B.S."/>
            <person name="Zhong J."/>
            <person name="Goodwin L."/>
            <person name="Copeland A."/>
            <person name="Lucas S."/>
            <person name="Han C."/>
            <person name="Pitluck S."/>
            <person name="Land M.L."/>
            <person name="Kyrpides N.C."/>
            <person name="Woyke T."/>
        </authorList>
    </citation>
    <scope>NUCLEOTIDE SEQUENCE [LARGE SCALE GENOMIC DNA]</scope>
    <source>
        <strain>ATCC 29413 / PCC 7937</strain>
    </source>
</reference>
<feature type="chain" id="PRO_1000030423" description="D-alanine--D-alanine ligase">
    <location>
        <begin position="1"/>
        <end position="367"/>
    </location>
</feature>
<feature type="domain" description="ATP-grasp" evidence="2">
    <location>
        <begin position="148"/>
        <end position="357"/>
    </location>
</feature>
<feature type="binding site" evidence="2">
    <location>
        <begin position="184"/>
        <end position="239"/>
    </location>
    <ligand>
        <name>ATP</name>
        <dbReference type="ChEBI" id="CHEBI:30616"/>
    </ligand>
</feature>
<feature type="binding site" evidence="2">
    <location>
        <position position="310"/>
    </location>
    <ligand>
        <name>Mg(2+)</name>
        <dbReference type="ChEBI" id="CHEBI:18420"/>
        <label>1</label>
    </ligand>
</feature>
<feature type="binding site" evidence="2">
    <location>
        <position position="324"/>
    </location>
    <ligand>
        <name>Mg(2+)</name>
        <dbReference type="ChEBI" id="CHEBI:18420"/>
        <label>1</label>
    </ligand>
</feature>
<feature type="binding site" evidence="2">
    <location>
        <position position="324"/>
    </location>
    <ligand>
        <name>Mg(2+)</name>
        <dbReference type="ChEBI" id="CHEBI:18420"/>
        <label>2</label>
    </ligand>
</feature>
<feature type="binding site" evidence="2">
    <location>
        <position position="326"/>
    </location>
    <ligand>
        <name>Mg(2+)</name>
        <dbReference type="ChEBI" id="CHEBI:18420"/>
        <label>2</label>
    </ligand>
</feature>
<dbReference type="EC" id="6.3.2.4" evidence="2"/>
<dbReference type="EMBL" id="CP000117">
    <property type="protein sequence ID" value="ABA19986.1"/>
    <property type="molecule type" value="Genomic_DNA"/>
</dbReference>
<dbReference type="SMR" id="Q3MGA0"/>
<dbReference type="STRING" id="240292.Ava_0360"/>
<dbReference type="KEGG" id="ava:Ava_0360"/>
<dbReference type="eggNOG" id="COG1181">
    <property type="taxonomic scope" value="Bacteria"/>
</dbReference>
<dbReference type="HOGENOM" id="CLU_039268_0_0_3"/>
<dbReference type="UniPathway" id="UPA00219"/>
<dbReference type="Proteomes" id="UP000002533">
    <property type="component" value="Chromosome"/>
</dbReference>
<dbReference type="GO" id="GO:0005829">
    <property type="term" value="C:cytosol"/>
    <property type="evidence" value="ECO:0007669"/>
    <property type="project" value="TreeGrafter"/>
</dbReference>
<dbReference type="GO" id="GO:0005524">
    <property type="term" value="F:ATP binding"/>
    <property type="evidence" value="ECO:0007669"/>
    <property type="project" value="UniProtKB-KW"/>
</dbReference>
<dbReference type="GO" id="GO:0008716">
    <property type="term" value="F:D-alanine-D-alanine ligase activity"/>
    <property type="evidence" value="ECO:0007669"/>
    <property type="project" value="UniProtKB-UniRule"/>
</dbReference>
<dbReference type="GO" id="GO:0046872">
    <property type="term" value="F:metal ion binding"/>
    <property type="evidence" value="ECO:0007669"/>
    <property type="project" value="UniProtKB-KW"/>
</dbReference>
<dbReference type="GO" id="GO:0071555">
    <property type="term" value="P:cell wall organization"/>
    <property type="evidence" value="ECO:0007669"/>
    <property type="project" value="UniProtKB-KW"/>
</dbReference>
<dbReference type="GO" id="GO:0009252">
    <property type="term" value="P:peptidoglycan biosynthetic process"/>
    <property type="evidence" value="ECO:0007669"/>
    <property type="project" value="UniProtKB-UniRule"/>
</dbReference>
<dbReference type="GO" id="GO:0008360">
    <property type="term" value="P:regulation of cell shape"/>
    <property type="evidence" value="ECO:0007669"/>
    <property type="project" value="UniProtKB-KW"/>
</dbReference>
<dbReference type="FunFam" id="3.30.1490.20:FF:000007">
    <property type="entry name" value="D-alanine--D-alanine ligase"/>
    <property type="match status" value="1"/>
</dbReference>
<dbReference type="FunFam" id="3.30.470.20:FF:000008">
    <property type="entry name" value="D-alanine--D-alanine ligase"/>
    <property type="match status" value="1"/>
</dbReference>
<dbReference type="Gene3D" id="3.40.50.20">
    <property type="match status" value="1"/>
</dbReference>
<dbReference type="Gene3D" id="3.30.1490.20">
    <property type="entry name" value="ATP-grasp fold, A domain"/>
    <property type="match status" value="1"/>
</dbReference>
<dbReference type="Gene3D" id="3.30.470.20">
    <property type="entry name" value="ATP-grasp fold, B domain"/>
    <property type="match status" value="1"/>
</dbReference>
<dbReference type="HAMAP" id="MF_00047">
    <property type="entry name" value="Dala_Dala_lig"/>
    <property type="match status" value="1"/>
</dbReference>
<dbReference type="InterPro" id="IPR011761">
    <property type="entry name" value="ATP-grasp"/>
</dbReference>
<dbReference type="InterPro" id="IPR013815">
    <property type="entry name" value="ATP_grasp_subdomain_1"/>
</dbReference>
<dbReference type="InterPro" id="IPR000291">
    <property type="entry name" value="D-Ala_lig_Van_CS"/>
</dbReference>
<dbReference type="InterPro" id="IPR005905">
    <property type="entry name" value="D_ala_D_ala"/>
</dbReference>
<dbReference type="InterPro" id="IPR011095">
    <property type="entry name" value="Dala_Dala_lig_C"/>
</dbReference>
<dbReference type="InterPro" id="IPR011127">
    <property type="entry name" value="Dala_Dala_lig_N"/>
</dbReference>
<dbReference type="InterPro" id="IPR016185">
    <property type="entry name" value="PreATP-grasp_dom_sf"/>
</dbReference>
<dbReference type="NCBIfam" id="TIGR01205">
    <property type="entry name" value="D_ala_D_alaTIGR"/>
    <property type="match status" value="1"/>
</dbReference>
<dbReference type="NCBIfam" id="NF002378">
    <property type="entry name" value="PRK01372.1"/>
    <property type="match status" value="1"/>
</dbReference>
<dbReference type="NCBIfam" id="NF002528">
    <property type="entry name" value="PRK01966.1-4"/>
    <property type="match status" value="1"/>
</dbReference>
<dbReference type="PANTHER" id="PTHR23132">
    <property type="entry name" value="D-ALANINE--D-ALANINE LIGASE"/>
    <property type="match status" value="1"/>
</dbReference>
<dbReference type="PANTHER" id="PTHR23132:SF25">
    <property type="entry name" value="D-ALANINE--D-ALANINE LIGASE A"/>
    <property type="match status" value="1"/>
</dbReference>
<dbReference type="Pfam" id="PF07478">
    <property type="entry name" value="Dala_Dala_lig_C"/>
    <property type="match status" value="1"/>
</dbReference>
<dbReference type="Pfam" id="PF01820">
    <property type="entry name" value="Dala_Dala_lig_N"/>
    <property type="match status" value="1"/>
</dbReference>
<dbReference type="PIRSF" id="PIRSF039102">
    <property type="entry name" value="Ddl/VanB"/>
    <property type="match status" value="1"/>
</dbReference>
<dbReference type="SUPFAM" id="SSF56059">
    <property type="entry name" value="Glutathione synthetase ATP-binding domain-like"/>
    <property type="match status" value="1"/>
</dbReference>
<dbReference type="SUPFAM" id="SSF52440">
    <property type="entry name" value="PreATP-grasp domain"/>
    <property type="match status" value="1"/>
</dbReference>
<dbReference type="PROSITE" id="PS50975">
    <property type="entry name" value="ATP_GRASP"/>
    <property type="match status" value="1"/>
</dbReference>
<dbReference type="PROSITE" id="PS00843">
    <property type="entry name" value="DALA_DALA_LIGASE_1"/>
    <property type="match status" value="1"/>
</dbReference>
<dbReference type="PROSITE" id="PS00844">
    <property type="entry name" value="DALA_DALA_LIGASE_2"/>
    <property type="match status" value="1"/>
</dbReference>
<accession>Q3MGA0</accession>
<gene>
    <name evidence="2" type="primary">ddl</name>
    <name type="ordered locus">Ava_0360</name>
</gene>